<reference key="1">
    <citation type="journal article" date="1985" name="Biol. Chem. Hoppe-Seyler">
        <title>The primary structure and functional properties of the hemoglobins of a ground squirrel (Spermophilus townsendii, Rodentia).</title>
        <authorList>
            <person name="Kleinschmidt T."/>
            <person name="Bieber F.A."/>
            <person name="Nadler C.F."/>
            <person name="Hoffmann R.S."/>
            <person name="Vida L.N."/>
            <person name="Honig G.R."/>
            <person name="Braunitzer G."/>
        </authorList>
    </citation>
    <scope>PROTEIN SEQUENCE</scope>
</reference>
<sequence>VHLTDGEKNAISTAWGKVNAAEIGAEALGRLLVVYPWTQRFFDSFGDLSSASAVMGNAKVKAHGKKVIDSFSNGLKHLDNLKGTFASLSELHCDKLHVDPENFKLLGNMIVIVMAHHLGKDFTPEAQAAFQKVVAGVANALSHKYH</sequence>
<protein>
    <recommendedName>
        <fullName>Hemoglobin subunit beta-S/F</fullName>
    </recommendedName>
    <alternativeName>
        <fullName>Beta-S/F-globin</fullName>
    </alternativeName>
    <alternativeName>
        <fullName>Hemoglobin beta-S/F chain</fullName>
    </alternativeName>
</protein>
<keyword id="KW-0007">Acetylation</keyword>
<keyword id="KW-0903">Direct protein sequencing</keyword>
<keyword id="KW-0349">Heme</keyword>
<keyword id="KW-0408">Iron</keyword>
<keyword id="KW-0479">Metal-binding</keyword>
<keyword id="KW-0561">Oxygen transport</keyword>
<keyword id="KW-0597">Phosphoprotein</keyword>
<keyword id="KW-0702">S-nitrosylation</keyword>
<keyword id="KW-0813">Transport</keyword>
<dbReference type="PIR" id="B24690">
    <property type="entry name" value="B24690"/>
</dbReference>
<dbReference type="SMR" id="P07410"/>
<dbReference type="GO" id="GO:0072562">
    <property type="term" value="C:blood microparticle"/>
    <property type="evidence" value="ECO:0007669"/>
    <property type="project" value="TreeGrafter"/>
</dbReference>
<dbReference type="GO" id="GO:0031838">
    <property type="term" value="C:haptoglobin-hemoglobin complex"/>
    <property type="evidence" value="ECO:0007669"/>
    <property type="project" value="TreeGrafter"/>
</dbReference>
<dbReference type="GO" id="GO:0005833">
    <property type="term" value="C:hemoglobin complex"/>
    <property type="evidence" value="ECO:0007669"/>
    <property type="project" value="InterPro"/>
</dbReference>
<dbReference type="GO" id="GO:0031720">
    <property type="term" value="F:haptoglobin binding"/>
    <property type="evidence" value="ECO:0007669"/>
    <property type="project" value="TreeGrafter"/>
</dbReference>
<dbReference type="GO" id="GO:0020037">
    <property type="term" value="F:heme binding"/>
    <property type="evidence" value="ECO:0007669"/>
    <property type="project" value="InterPro"/>
</dbReference>
<dbReference type="GO" id="GO:0031721">
    <property type="term" value="F:hemoglobin alpha binding"/>
    <property type="evidence" value="ECO:0007669"/>
    <property type="project" value="TreeGrafter"/>
</dbReference>
<dbReference type="GO" id="GO:0046872">
    <property type="term" value="F:metal ion binding"/>
    <property type="evidence" value="ECO:0007669"/>
    <property type="project" value="UniProtKB-KW"/>
</dbReference>
<dbReference type="GO" id="GO:0043177">
    <property type="term" value="F:organic acid binding"/>
    <property type="evidence" value="ECO:0007669"/>
    <property type="project" value="TreeGrafter"/>
</dbReference>
<dbReference type="GO" id="GO:0019825">
    <property type="term" value="F:oxygen binding"/>
    <property type="evidence" value="ECO:0007669"/>
    <property type="project" value="InterPro"/>
</dbReference>
<dbReference type="GO" id="GO:0005344">
    <property type="term" value="F:oxygen carrier activity"/>
    <property type="evidence" value="ECO:0007669"/>
    <property type="project" value="UniProtKB-KW"/>
</dbReference>
<dbReference type="GO" id="GO:0004601">
    <property type="term" value="F:peroxidase activity"/>
    <property type="evidence" value="ECO:0007669"/>
    <property type="project" value="TreeGrafter"/>
</dbReference>
<dbReference type="GO" id="GO:0042744">
    <property type="term" value="P:hydrogen peroxide catabolic process"/>
    <property type="evidence" value="ECO:0007669"/>
    <property type="project" value="TreeGrafter"/>
</dbReference>
<dbReference type="CDD" id="cd08925">
    <property type="entry name" value="Hb-beta-like"/>
    <property type="match status" value="1"/>
</dbReference>
<dbReference type="FunFam" id="1.10.490.10:FF:000001">
    <property type="entry name" value="Hemoglobin subunit beta"/>
    <property type="match status" value="1"/>
</dbReference>
<dbReference type="Gene3D" id="1.10.490.10">
    <property type="entry name" value="Globins"/>
    <property type="match status" value="1"/>
</dbReference>
<dbReference type="InterPro" id="IPR000971">
    <property type="entry name" value="Globin"/>
</dbReference>
<dbReference type="InterPro" id="IPR009050">
    <property type="entry name" value="Globin-like_sf"/>
</dbReference>
<dbReference type="InterPro" id="IPR012292">
    <property type="entry name" value="Globin/Proto"/>
</dbReference>
<dbReference type="InterPro" id="IPR002337">
    <property type="entry name" value="Hemoglobin_b"/>
</dbReference>
<dbReference type="InterPro" id="IPR050056">
    <property type="entry name" value="Hemoglobin_oxygen_transport"/>
</dbReference>
<dbReference type="PANTHER" id="PTHR11442">
    <property type="entry name" value="HEMOGLOBIN FAMILY MEMBER"/>
    <property type="match status" value="1"/>
</dbReference>
<dbReference type="PANTHER" id="PTHR11442:SF42">
    <property type="entry name" value="HEMOGLOBIN SUBUNIT BETA"/>
    <property type="match status" value="1"/>
</dbReference>
<dbReference type="Pfam" id="PF00042">
    <property type="entry name" value="Globin"/>
    <property type="match status" value="1"/>
</dbReference>
<dbReference type="PRINTS" id="PR00814">
    <property type="entry name" value="BETAHAEM"/>
</dbReference>
<dbReference type="SUPFAM" id="SSF46458">
    <property type="entry name" value="Globin-like"/>
    <property type="match status" value="1"/>
</dbReference>
<dbReference type="PROSITE" id="PS01033">
    <property type="entry name" value="GLOBIN"/>
    <property type="match status" value="1"/>
</dbReference>
<accession>P07410</accession>
<comment type="function">
    <text>Involved in oxygen transport from the lung to the various peripheral tissues.</text>
</comment>
<comment type="subunit">
    <text>Heterotetramer of two alpha chains and two beta chains.</text>
</comment>
<comment type="tissue specificity">
    <text>Red blood cells.</text>
</comment>
<comment type="polymorphism">
    <text evidence="4">There are two alleles. The sequence shown is that of beta-S.</text>
</comment>
<comment type="similarity">
    <text evidence="3">Belongs to the globin family.</text>
</comment>
<name>HBB_UROTO</name>
<evidence type="ECO:0000250" key="1">
    <source>
        <dbReference type="UniProtKB" id="P02086"/>
    </source>
</evidence>
<evidence type="ECO:0000250" key="2">
    <source>
        <dbReference type="UniProtKB" id="P68871"/>
    </source>
</evidence>
<evidence type="ECO:0000255" key="3">
    <source>
        <dbReference type="PROSITE-ProRule" id="PRU00238"/>
    </source>
</evidence>
<evidence type="ECO:0000269" key="4">
    <source>
    </source>
</evidence>
<organism>
    <name type="scientific">Urocitellus townsendii</name>
    <name type="common">Townsend's ground squirrel</name>
    <name type="synonym">Spermophilus townsendii</name>
    <dbReference type="NCBI Taxonomy" id="99861"/>
    <lineage>
        <taxon>Eukaryota</taxon>
        <taxon>Metazoa</taxon>
        <taxon>Chordata</taxon>
        <taxon>Craniata</taxon>
        <taxon>Vertebrata</taxon>
        <taxon>Euteleostomi</taxon>
        <taxon>Mammalia</taxon>
        <taxon>Eutheria</taxon>
        <taxon>Euarchontoglires</taxon>
        <taxon>Glires</taxon>
        <taxon>Rodentia</taxon>
        <taxon>Sciuromorpha</taxon>
        <taxon>Sciuridae</taxon>
        <taxon>Xerinae</taxon>
        <taxon>Marmotini</taxon>
        <taxon>Urocitellus</taxon>
    </lineage>
</organism>
<proteinExistence type="evidence at protein level"/>
<feature type="chain" id="PRO_0000053112" description="Hemoglobin subunit beta-S/F">
    <location>
        <begin position="1"/>
        <end position="146"/>
    </location>
</feature>
<feature type="domain" description="Globin" evidence="3">
    <location>
        <begin position="2"/>
        <end position="146"/>
    </location>
</feature>
<feature type="binding site" description="distal binding residue">
    <location>
        <position position="63"/>
    </location>
    <ligand>
        <name>heme b</name>
        <dbReference type="ChEBI" id="CHEBI:60344"/>
    </ligand>
    <ligandPart>
        <name>Fe</name>
        <dbReference type="ChEBI" id="CHEBI:18248"/>
    </ligandPart>
</feature>
<feature type="binding site" description="proximal binding residue">
    <location>
        <position position="92"/>
    </location>
    <ligand>
        <name>heme b</name>
        <dbReference type="ChEBI" id="CHEBI:60344"/>
    </ligand>
    <ligandPart>
        <name>Fe</name>
        <dbReference type="ChEBI" id="CHEBI:18248"/>
    </ligandPart>
</feature>
<feature type="modified residue" description="N-acetylvaline" evidence="1">
    <location>
        <position position="1"/>
    </location>
</feature>
<feature type="modified residue" description="Phosphoserine" evidence="2">
    <location>
        <position position="44"/>
    </location>
</feature>
<feature type="modified residue" description="N6-acetyllysine" evidence="2">
    <location>
        <position position="59"/>
    </location>
</feature>
<feature type="modified residue" description="N6-acetyllysine" evidence="2">
    <location>
        <position position="82"/>
    </location>
</feature>
<feature type="modified residue" description="S-nitrosocysteine" evidence="2">
    <location>
        <position position="93"/>
    </location>
</feature>
<feature type="modified residue" description="N6-acetyllysine" evidence="2">
    <location>
        <position position="144"/>
    </location>
</feature>
<feature type="sequence variant" description="In beta-F." evidence="4">
    <original>A</original>
    <variation>D</variation>
    <location>
        <position position="58"/>
    </location>
</feature>